<name>EFG_LACDB</name>
<accession>Q04C17</accession>
<dbReference type="EMBL" id="CP000412">
    <property type="protein sequence ID" value="ABJ58005.1"/>
    <property type="molecule type" value="Genomic_DNA"/>
</dbReference>
<dbReference type="RefSeq" id="WP_003620826.1">
    <property type="nucleotide sequence ID" value="NC_008529.1"/>
</dbReference>
<dbReference type="SMR" id="Q04C17"/>
<dbReference type="KEGG" id="lbu:LBUL_0348"/>
<dbReference type="HOGENOM" id="CLU_002794_4_1_9"/>
<dbReference type="BioCyc" id="LDEL321956:LBUL_RS01625-MONOMER"/>
<dbReference type="GO" id="GO:0005737">
    <property type="term" value="C:cytoplasm"/>
    <property type="evidence" value="ECO:0007669"/>
    <property type="project" value="UniProtKB-SubCell"/>
</dbReference>
<dbReference type="GO" id="GO:0005525">
    <property type="term" value="F:GTP binding"/>
    <property type="evidence" value="ECO:0007669"/>
    <property type="project" value="UniProtKB-UniRule"/>
</dbReference>
<dbReference type="GO" id="GO:0003924">
    <property type="term" value="F:GTPase activity"/>
    <property type="evidence" value="ECO:0007669"/>
    <property type="project" value="InterPro"/>
</dbReference>
<dbReference type="GO" id="GO:0003746">
    <property type="term" value="F:translation elongation factor activity"/>
    <property type="evidence" value="ECO:0007669"/>
    <property type="project" value="UniProtKB-UniRule"/>
</dbReference>
<dbReference type="GO" id="GO:0032790">
    <property type="term" value="P:ribosome disassembly"/>
    <property type="evidence" value="ECO:0007669"/>
    <property type="project" value="TreeGrafter"/>
</dbReference>
<dbReference type="CDD" id="cd01886">
    <property type="entry name" value="EF-G"/>
    <property type="match status" value="1"/>
</dbReference>
<dbReference type="CDD" id="cd16262">
    <property type="entry name" value="EFG_III"/>
    <property type="match status" value="1"/>
</dbReference>
<dbReference type="CDD" id="cd01434">
    <property type="entry name" value="EFG_mtEFG1_IV"/>
    <property type="match status" value="1"/>
</dbReference>
<dbReference type="CDD" id="cd03713">
    <property type="entry name" value="EFG_mtEFG_C"/>
    <property type="match status" value="1"/>
</dbReference>
<dbReference type="CDD" id="cd04088">
    <property type="entry name" value="EFG_mtEFG_II"/>
    <property type="match status" value="1"/>
</dbReference>
<dbReference type="FunFam" id="2.40.30.10:FF:000006">
    <property type="entry name" value="Elongation factor G"/>
    <property type="match status" value="1"/>
</dbReference>
<dbReference type="FunFam" id="3.30.230.10:FF:000003">
    <property type="entry name" value="Elongation factor G"/>
    <property type="match status" value="1"/>
</dbReference>
<dbReference type="FunFam" id="3.30.70.240:FF:000001">
    <property type="entry name" value="Elongation factor G"/>
    <property type="match status" value="1"/>
</dbReference>
<dbReference type="FunFam" id="3.30.70.870:FF:000001">
    <property type="entry name" value="Elongation factor G"/>
    <property type="match status" value="1"/>
</dbReference>
<dbReference type="FunFam" id="3.40.50.300:FF:000029">
    <property type="entry name" value="Elongation factor G"/>
    <property type="match status" value="1"/>
</dbReference>
<dbReference type="Gene3D" id="3.30.230.10">
    <property type="match status" value="1"/>
</dbReference>
<dbReference type="Gene3D" id="3.30.70.240">
    <property type="match status" value="1"/>
</dbReference>
<dbReference type="Gene3D" id="3.30.70.870">
    <property type="entry name" value="Elongation Factor G (Translational Gtpase), domain 3"/>
    <property type="match status" value="1"/>
</dbReference>
<dbReference type="Gene3D" id="3.40.50.300">
    <property type="entry name" value="P-loop containing nucleotide triphosphate hydrolases"/>
    <property type="match status" value="1"/>
</dbReference>
<dbReference type="Gene3D" id="2.40.30.10">
    <property type="entry name" value="Translation factors"/>
    <property type="match status" value="1"/>
</dbReference>
<dbReference type="HAMAP" id="MF_00054_B">
    <property type="entry name" value="EF_G_EF_2_B"/>
    <property type="match status" value="1"/>
</dbReference>
<dbReference type="InterPro" id="IPR041095">
    <property type="entry name" value="EFG_II"/>
</dbReference>
<dbReference type="InterPro" id="IPR009022">
    <property type="entry name" value="EFG_III"/>
</dbReference>
<dbReference type="InterPro" id="IPR035647">
    <property type="entry name" value="EFG_III/V"/>
</dbReference>
<dbReference type="InterPro" id="IPR047872">
    <property type="entry name" value="EFG_IV"/>
</dbReference>
<dbReference type="InterPro" id="IPR035649">
    <property type="entry name" value="EFG_V"/>
</dbReference>
<dbReference type="InterPro" id="IPR000640">
    <property type="entry name" value="EFG_V-like"/>
</dbReference>
<dbReference type="InterPro" id="IPR004161">
    <property type="entry name" value="EFTu-like_2"/>
</dbReference>
<dbReference type="InterPro" id="IPR031157">
    <property type="entry name" value="G_TR_CS"/>
</dbReference>
<dbReference type="InterPro" id="IPR027417">
    <property type="entry name" value="P-loop_NTPase"/>
</dbReference>
<dbReference type="InterPro" id="IPR020568">
    <property type="entry name" value="Ribosomal_Su5_D2-typ_SF"/>
</dbReference>
<dbReference type="InterPro" id="IPR014721">
    <property type="entry name" value="Ribsml_uS5_D2-typ_fold_subgr"/>
</dbReference>
<dbReference type="InterPro" id="IPR005225">
    <property type="entry name" value="Small_GTP-bd"/>
</dbReference>
<dbReference type="InterPro" id="IPR000795">
    <property type="entry name" value="T_Tr_GTP-bd_dom"/>
</dbReference>
<dbReference type="InterPro" id="IPR009000">
    <property type="entry name" value="Transl_B-barrel_sf"/>
</dbReference>
<dbReference type="InterPro" id="IPR004540">
    <property type="entry name" value="Transl_elong_EFG/EF2"/>
</dbReference>
<dbReference type="InterPro" id="IPR005517">
    <property type="entry name" value="Transl_elong_EFG/EF2_IV"/>
</dbReference>
<dbReference type="NCBIfam" id="TIGR00484">
    <property type="entry name" value="EF-G"/>
    <property type="match status" value="1"/>
</dbReference>
<dbReference type="NCBIfam" id="NF009379">
    <property type="entry name" value="PRK12740.1-3"/>
    <property type="match status" value="1"/>
</dbReference>
<dbReference type="NCBIfam" id="NF009381">
    <property type="entry name" value="PRK12740.1-5"/>
    <property type="match status" value="1"/>
</dbReference>
<dbReference type="NCBIfam" id="TIGR00231">
    <property type="entry name" value="small_GTP"/>
    <property type="match status" value="1"/>
</dbReference>
<dbReference type="PANTHER" id="PTHR43261:SF1">
    <property type="entry name" value="RIBOSOME-RELEASING FACTOR 2, MITOCHONDRIAL"/>
    <property type="match status" value="1"/>
</dbReference>
<dbReference type="PANTHER" id="PTHR43261">
    <property type="entry name" value="TRANSLATION ELONGATION FACTOR G-RELATED"/>
    <property type="match status" value="1"/>
</dbReference>
<dbReference type="Pfam" id="PF00679">
    <property type="entry name" value="EFG_C"/>
    <property type="match status" value="1"/>
</dbReference>
<dbReference type="Pfam" id="PF14492">
    <property type="entry name" value="EFG_III"/>
    <property type="match status" value="1"/>
</dbReference>
<dbReference type="Pfam" id="PF03764">
    <property type="entry name" value="EFG_IV"/>
    <property type="match status" value="1"/>
</dbReference>
<dbReference type="Pfam" id="PF00009">
    <property type="entry name" value="GTP_EFTU"/>
    <property type="match status" value="1"/>
</dbReference>
<dbReference type="Pfam" id="PF03144">
    <property type="entry name" value="GTP_EFTU_D2"/>
    <property type="match status" value="1"/>
</dbReference>
<dbReference type="PRINTS" id="PR00315">
    <property type="entry name" value="ELONGATNFCT"/>
</dbReference>
<dbReference type="SMART" id="SM00838">
    <property type="entry name" value="EFG_C"/>
    <property type="match status" value="1"/>
</dbReference>
<dbReference type="SMART" id="SM00889">
    <property type="entry name" value="EFG_IV"/>
    <property type="match status" value="1"/>
</dbReference>
<dbReference type="SUPFAM" id="SSF54980">
    <property type="entry name" value="EF-G C-terminal domain-like"/>
    <property type="match status" value="2"/>
</dbReference>
<dbReference type="SUPFAM" id="SSF52540">
    <property type="entry name" value="P-loop containing nucleoside triphosphate hydrolases"/>
    <property type="match status" value="1"/>
</dbReference>
<dbReference type="SUPFAM" id="SSF54211">
    <property type="entry name" value="Ribosomal protein S5 domain 2-like"/>
    <property type="match status" value="1"/>
</dbReference>
<dbReference type="SUPFAM" id="SSF50447">
    <property type="entry name" value="Translation proteins"/>
    <property type="match status" value="1"/>
</dbReference>
<dbReference type="PROSITE" id="PS00301">
    <property type="entry name" value="G_TR_1"/>
    <property type="match status" value="1"/>
</dbReference>
<dbReference type="PROSITE" id="PS51722">
    <property type="entry name" value="G_TR_2"/>
    <property type="match status" value="1"/>
</dbReference>
<evidence type="ECO:0000255" key="1">
    <source>
        <dbReference type="HAMAP-Rule" id="MF_00054"/>
    </source>
</evidence>
<comment type="function">
    <text evidence="1">Catalyzes the GTP-dependent ribosomal translocation step during translation elongation. During this step, the ribosome changes from the pre-translocational (PRE) to the post-translocational (POST) state as the newly formed A-site-bound peptidyl-tRNA and P-site-bound deacylated tRNA move to the P and E sites, respectively. Catalyzes the coordinated movement of the two tRNA molecules, the mRNA and conformational changes in the ribosome.</text>
</comment>
<comment type="subcellular location">
    <subcellularLocation>
        <location evidence="1">Cytoplasm</location>
    </subcellularLocation>
</comment>
<comment type="similarity">
    <text evidence="1">Belongs to the TRAFAC class translation factor GTPase superfamily. Classic translation factor GTPase family. EF-G/EF-2 subfamily.</text>
</comment>
<feature type="chain" id="PRO_1000008837" description="Elongation factor G">
    <location>
        <begin position="1"/>
        <end position="694"/>
    </location>
</feature>
<feature type="domain" description="tr-type G">
    <location>
        <begin position="10"/>
        <end position="285"/>
    </location>
</feature>
<feature type="binding site" evidence="1">
    <location>
        <begin position="19"/>
        <end position="26"/>
    </location>
    <ligand>
        <name>GTP</name>
        <dbReference type="ChEBI" id="CHEBI:37565"/>
    </ligand>
</feature>
<feature type="binding site" evidence="1">
    <location>
        <begin position="83"/>
        <end position="87"/>
    </location>
    <ligand>
        <name>GTP</name>
        <dbReference type="ChEBI" id="CHEBI:37565"/>
    </ligand>
</feature>
<feature type="binding site" evidence="1">
    <location>
        <begin position="137"/>
        <end position="140"/>
    </location>
    <ligand>
        <name>GTP</name>
        <dbReference type="ChEBI" id="CHEBI:37565"/>
    </ligand>
</feature>
<protein>
    <recommendedName>
        <fullName evidence="1">Elongation factor G</fullName>
        <shortName evidence="1">EF-G</shortName>
    </recommendedName>
</protein>
<gene>
    <name evidence="1" type="primary">fusA</name>
    <name type="ordered locus">LBUL_0348</name>
</gene>
<organism>
    <name type="scientific">Lactobacillus delbrueckii subsp. bulgaricus (strain ATCC BAA-365 / Lb-18)</name>
    <dbReference type="NCBI Taxonomy" id="321956"/>
    <lineage>
        <taxon>Bacteria</taxon>
        <taxon>Bacillati</taxon>
        <taxon>Bacillota</taxon>
        <taxon>Bacilli</taxon>
        <taxon>Lactobacillales</taxon>
        <taxon>Lactobacillaceae</taxon>
        <taxon>Lactobacillus</taxon>
    </lineage>
</organism>
<reference key="1">
    <citation type="journal article" date="2006" name="Proc. Natl. Acad. Sci. U.S.A.">
        <title>Comparative genomics of the lactic acid bacteria.</title>
        <authorList>
            <person name="Makarova K.S."/>
            <person name="Slesarev A."/>
            <person name="Wolf Y.I."/>
            <person name="Sorokin A."/>
            <person name="Mirkin B."/>
            <person name="Koonin E.V."/>
            <person name="Pavlov A."/>
            <person name="Pavlova N."/>
            <person name="Karamychev V."/>
            <person name="Polouchine N."/>
            <person name="Shakhova V."/>
            <person name="Grigoriev I."/>
            <person name="Lou Y."/>
            <person name="Rohksar D."/>
            <person name="Lucas S."/>
            <person name="Huang K."/>
            <person name="Goodstein D.M."/>
            <person name="Hawkins T."/>
            <person name="Plengvidhya V."/>
            <person name="Welker D."/>
            <person name="Hughes J."/>
            <person name="Goh Y."/>
            <person name="Benson A."/>
            <person name="Baldwin K."/>
            <person name="Lee J.-H."/>
            <person name="Diaz-Muniz I."/>
            <person name="Dosti B."/>
            <person name="Smeianov V."/>
            <person name="Wechter W."/>
            <person name="Barabote R."/>
            <person name="Lorca G."/>
            <person name="Altermann E."/>
            <person name="Barrangou R."/>
            <person name="Ganesan B."/>
            <person name="Xie Y."/>
            <person name="Rawsthorne H."/>
            <person name="Tamir D."/>
            <person name="Parker C."/>
            <person name="Breidt F."/>
            <person name="Broadbent J.R."/>
            <person name="Hutkins R."/>
            <person name="O'Sullivan D."/>
            <person name="Steele J."/>
            <person name="Unlu G."/>
            <person name="Saier M.H. Jr."/>
            <person name="Klaenhammer T."/>
            <person name="Richardson P."/>
            <person name="Kozyavkin S."/>
            <person name="Weimer B.C."/>
            <person name="Mills D.A."/>
        </authorList>
    </citation>
    <scope>NUCLEOTIDE SEQUENCE [LARGE SCALE GENOMIC DNA]</scope>
    <source>
        <strain>ATCC BAA-365 / Lb-18</strain>
    </source>
</reference>
<proteinExistence type="inferred from homology"/>
<keyword id="KW-0963">Cytoplasm</keyword>
<keyword id="KW-0251">Elongation factor</keyword>
<keyword id="KW-0342">GTP-binding</keyword>
<keyword id="KW-0547">Nucleotide-binding</keyword>
<keyword id="KW-0648">Protein biosynthesis</keyword>
<sequence>MANKREFSLEKTRNIGIMAHIDAGKTTTTERILYYTGKIHKIGETHEGDSQMDWMEEEKERGITITSAATTAQWKDHRINIIDTPGHVDFTIEVERSLRVLDGAVTVLDAQSGVEPQTENVWRQAENYGVPRIVFVNKMDKIGANFDFSVKSLHERLNANAIAVQMPIGAEDQFEGVIDLFDMVADVYDEDKLGAKWETIPVPDEYKEEAESRREEMIEEIAEVDDDIMEKFLGGEEISNEELKAALRRATLDLKAFPVFAGSAFKNKGVQMMLDGVVDYLPSPLDVKPYIAHDKEGNEVELLADDNKPFAALAFKIATDPFVGRLTFIRVYTGSLESGSYVLNASKNQRERVGRLLQMHANSRTEIPEVFSGDIAGAIGLKDTTTGDSLTDPAHPLILESLDIPAPVIQVSVEPKSKADRDKMDVALQKLTEEDPTFRAETNPETGETLISGMGELHLDIMVERMKREFNVEATIGEPQVAYRETFTVPTQAQGKFVRQSGGKGQYGDVWIEFTPNEGKGYEFEDAIVGGVVPREYIPSVDAGLQEAMKNGVLAGYPLIDVKAKLYDGSYHEVDSSEAAFKVAASLALKNAASKAGAVILEPIMKVQVIAPEEYLGDVMGSITARRGQMEGMEDRAGAKVINAMVPLSEMFGYATTLRSSTQGRGTFTMVMDHYSPCPKSIQAEIIKKRGGNA</sequence>